<feature type="chain" id="PRO_0000289777" description="sn-glycerol-3-phosphate import ATP-binding protein UgpC">
    <location>
        <begin position="1"/>
        <end position="358"/>
    </location>
</feature>
<feature type="domain" description="ABC transporter" evidence="1">
    <location>
        <begin position="4"/>
        <end position="235"/>
    </location>
</feature>
<feature type="binding site" evidence="1">
    <location>
        <begin position="37"/>
        <end position="44"/>
    </location>
    <ligand>
        <name>ATP</name>
        <dbReference type="ChEBI" id="CHEBI:30616"/>
    </ligand>
</feature>
<accession>Q164Y5</accession>
<gene>
    <name evidence="1" type="primary">ugpC</name>
    <name type="ordered locus">RD1_2936</name>
</gene>
<reference key="1">
    <citation type="journal article" date="2007" name="J. Bacteriol.">
        <title>The complete genome sequence of Roseobacter denitrificans reveals a mixotrophic rather than photosynthetic metabolism.</title>
        <authorList>
            <person name="Swingley W.D."/>
            <person name="Sadekar S."/>
            <person name="Mastrian S.D."/>
            <person name="Matthies H.J."/>
            <person name="Hao J."/>
            <person name="Ramos H."/>
            <person name="Acharya C.R."/>
            <person name="Conrad A.L."/>
            <person name="Taylor H.L."/>
            <person name="Dejesa L.C."/>
            <person name="Shah M.K."/>
            <person name="O'Huallachain M.E."/>
            <person name="Lince M.T."/>
            <person name="Blankenship R.E."/>
            <person name="Beatty J.T."/>
            <person name="Touchman J.W."/>
        </authorList>
    </citation>
    <scope>NUCLEOTIDE SEQUENCE [LARGE SCALE GENOMIC DNA]</scope>
    <source>
        <strain>ATCC 33942 / OCh 114</strain>
    </source>
</reference>
<comment type="function">
    <text evidence="1">Part of the ABC transporter complex UgpBAEC involved in sn-glycerol-3-phosphate (G3P) import. Responsible for energy coupling to the transport system.</text>
</comment>
<comment type="catalytic activity">
    <reaction evidence="1">
        <text>sn-glycerol 3-phosphate(out) + ATP + H2O = sn-glycerol 3-phosphate(in) + ADP + phosphate + H(+)</text>
        <dbReference type="Rhea" id="RHEA:21668"/>
        <dbReference type="ChEBI" id="CHEBI:15377"/>
        <dbReference type="ChEBI" id="CHEBI:15378"/>
        <dbReference type="ChEBI" id="CHEBI:30616"/>
        <dbReference type="ChEBI" id="CHEBI:43474"/>
        <dbReference type="ChEBI" id="CHEBI:57597"/>
        <dbReference type="ChEBI" id="CHEBI:456216"/>
        <dbReference type="EC" id="7.6.2.10"/>
    </reaction>
</comment>
<comment type="subunit">
    <text evidence="1">The complex is composed of two ATP-binding proteins (UgpC), two transmembrane proteins (UgpA and UgpE) and a solute-binding protein (UgpB).</text>
</comment>
<comment type="subcellular location">
    <subcellularLocation>
        <location evidence="1">Cell inner membrane</location>
        <topology evidence="1">Peripheral membrane protein</topology>
    </subcellularLocation>
</comment>
<comment type="similarity">
    <text evidence="1">Belongs to the ABC transporter superfamily. sn-glycerol-3-phosphate importer (TC 3.A.1.1.3) family.</text>
</comment>
<keyword id="KW-0067">ATP-binding</keyword>
<keyword id="KW-0997">Cell inner membrane</keyword>
<keyword id="KW-1003">Cell membrane</keyword>
<keyword id="KW-0472">Membrane</keyword>
<keyword id="KW-0547">Nucleotide-binding</keyword>
<keyword id="KW-1185">Reference proteome</keyword>
<keyword id="KW-0762">Sugar transport</keyword>
<keyword id="KW-1278">Translocase</keyword>
<keyword id="KW-0813">Transport</keyword>
<evidence type="ECO:0000255" key="1">
    <source>
        <dbReference type="HAMAP-Rule" id="MF_01727"/>
    </source>
</evidence>
<sequence length="358" mass="39661">MAQVELKQVRKTYPNGAEAIFGVDMKIDDGELIVFVGPSGCGKSTLLRMVAGLESISSGEILIGDRVINDVSPSERDVAMVFQNYALYPHMSVRGNMSYGLKNRKMDKEEIERRITDAATMLKIDQFLDRQPNQLSGGQRQRVAMGRAIVRHPQVFLFDEPLSNLDAKLRVQMRIEIKKLQRRMNVTSIYVTHDQTEAMTLADRLAVINEGQIEQMGAPMELYSNPATLFVASFIGAPQINLIPVAFDGSAIVNGDLRIGGFSDLPMGVDLKLGVRPDVMTIDPEGQVMMNVDIVEQHGGENLIYGTIDGVFSGEGEPQEVCLKGSQTLLPNPDDKLRLRFDPDAAFIFRTDTGERLK</sequence>
<protein>
    <recommendedName>
        <fullName evidence="1">sn-glycerol-3-phosphate import ATP-binding protein UgpC</fullName>
        <ecNumber evidence="1">7.6.2.10</ecNumber>
    </recommendedName>
</protein>
<proteinExistence type="inferred from homology"/>
<name>UGPC_ROSDO</name>
<organism>
    <name type="scientific">Roseobacter denitrificans (strain ATCC 33942 / OCh 114)</name>
    <name type="common">Erythrobacter sp. (strain OCh 114)</name>
    <name type="synonym">Roseobacter denitrificans</name>
    <dbReference type="NCBI Taxonomy" id="375451"/>
    <lineage>
        <taxon>Bacteria</taxon>
        <taxon>Pseudomonadati</taxon>
        <taxon>Pseudomonadota</taxon>
        <taxon>Alphaproteobacteria</taxon>
        <taxon>Rhodobacterales</taxon>
        <taxon>Roseobacteraceae</taxon>
        <taxon>Roseobacter</taxon>
    </lineage>
</organism>
<dbReference type="EC" id="7.6.2.10" evidence="1"/>
<dbReference type="EMBL" id="CP000362">
    <property type="protein sequence ID" value="ABG32458.1"/>
    <property type="molecule type" value="Genomic_DNA"/>
</dbReference>
<dbReference type="RefSeq" id="WP_011569074.1">
    <property type="nucleotide sequence ID" value="NC_008209.1"/>
</dbReference>
<dbReference type="SMR" id="Q164Y5"/>
<dbReference type="STRING" id="375451.RD1_2936"/>
<dbReference type="KEGG" id="rde:RD1_2936"/>
<dbReference type="eggNOG" id="COG3842">
    <property type="taxonomic scope" value="Bacteria"/>
</dbReference>
<dbReference type="HOGENOM" id="CLU_000604_1_1_5"/>
<dbReference type="OrthoDB" id="9802264at2"/>
<dbReference type="Proteomes" id="UP000007029">
    <property type="component" value="Chromosome"/>
</dbReference>
<dbReference type="GO" id="GO:0055052">
    <property type="term" value="C:ATP-binding cassette (ABC) transporter complex, substrate-binding subunit-containing"/>
    <property type="evidence" value="ECO:0007669"/>
    <property type="project" value="TreeGrafter"/>
</dbReference>
<dbReference type="GO" id="GO:0015430">
    <property type="term" value="F:ABC-type glycerol-3-phosphate transporter activity"/>
    <property type="evidence" value="ECO:0007669"/>
    <property type="project" value="UniProtKB-EC"/>
</dbReference>
<dbReference type="GO" id="GO:0005524">
    <property type="term" value="F:ATP binding"/>
    <property type="evidence" value="ECO:0007669"/>
    <property type="project" value="UniProtKB-KW"/>
</dbReference>
<dbReference type="GO" id="GO:0016887">
    <property type="term" value="F:ATP hydrolysis activity"/>
    <property type="evidence" value="ECO:0007669"/>
    <property type="project" value="InterPro"/>
</dbReference>
<dbReference type="GO" id="GO:0008643">
    <property type="term" value="P:carbohydrate transport"/>
    <property type="evidence" value="ECO:0007669"/>
    <property type="project" value="InterPro"/>
</dbReference>
<dbReference type="CDD" id="cd03301">
    <property type="entry name" value="ABC_MalK_N"/>
    <property type="match status" value="1"/>
</dbReference>
<dbReference type="FunFam" id="3.40.50.300:FF:000042">
    <property type="entry name" value="Maltose/maltodextrin ABC transporter, ATP-binding protein"/>
    <property type="match status" value="1"/>
</dbReference>
<dbReference type="Gene3D" id="2.40.50.100">
    <property type="match status" value="1"/>
</dbReference>
<dbReference type="Gene3D" id="2.40.50.140">
    <property type="entry name" value="Nucleic acid-binding proteins"/>
    <property type="match status" value="1"/>
</dbReference>
<dbReference type="Gene3D" id="3.40.50.300">
    <property type="entry name" value="P-loop containing nucleotide triphosphate hydrolases"/>
    <property type="match status" value="1"/>
</dbReference>
<dbReference type="InterPro" id="IPR003593">
    <property type="entry name" value="AAA+_ATPase"/>
</dbReference>
<dbReference type="InterPro" id="IPR003439">
    <property type="entry name" value="ABC_transporter-like_ATP-bd"/>
</dbReference>
<dbReference type="InterPro" id="IPR017871">
    <property type="entry name" value="ABC_transporter-like_CS"/>
</dbReference>
<dbReference type="InterPro" id="IPR015855">
    <property type="entry name" value="ABC_transpr_MalK-like"/>
</dbReference>
<dbReference type="InterPro" id="IPR047641">
    <property type="entry name" value="ABC_transpr_MalK/UgpC-like"/>
</dbReference>
<dbReference type="InterPro" id="IPR008995">
    <property type="entry name" value="Mo/tungstate-bd_C_term_dom"/>
</dbReference>
<dbReference type="InterPro" id="IPR012340">
    <property type="entry name" value="NA-bd_OB-fold"/>
</dbReference>
<dbReference type="InterPro" id="IPR027417">
    <property type="entry name" value="P-loop_NTPase"/>
</dbReference>
<dbReference type="NCBIfam" id="NF008653">
    <property type="entry name" value="PRK11650.1"/>
    <property type="match status" value="1"/>
</dbReference>
<dbReference type="PANTHER" id="PTHR43875">
    <property type="entry name" value="MALTODEXTRIN IMPORT ATP-BINDING PROTEIN MSMX"/>
    <property type="match status" value="1"/>
</dbReference>
<dbReference type="PANTHER" id="PTHR43875:SF1">
    <property type="entry name" value="OSMOPROTECTIVE COMPOUNDS UPTAKE ATP-BINDING PROTEIN GGTA"/>
    <property type="match status" value="1"/>
</dbReference>
<dbReference type="Pfam" id="PF00005">
    <property type="entry name" value="ABC_tran"/>
    <property type="match status" value="1"/>
</dbReference>
<dbReference type="SMART" id="SM00382">
    <property type="entry name" value="AAA"/>
    <property type="match status" value="1"/>
</dbReference>
<dbReference type="SUPFAM" id="SSF50331">
    <property type="entry name" value="MOP-like"/>
    <property type="match status" value="1"/>
</dbReference>
<dbReference type="SUPFAM" id="SSF52540">
    <property type="entry name" value="P-loop containing nucleoside triphosphate hydrolases"/>
    <property type="match status" value="1"/>
</dbReference>
<dbReference type="PROSITE" id="PS00211">
    <property type="entry name" value="ABC_TRANSPORTER_1"/>
    <property type="match status" value="1"/>
</dbReference>
<dbReference type="PROSITE" id="PS50893">
    <property type="entry name" value="ABC_TRANSPORTER_2"/>
    <property type="match status" value="1"/>
</dbReference>
<dbReference type="PROSITE" id="PS51315">
    <property type="entry name" value="UGPC"/>
    <property type="match status" value="1"/>
</dbReference>